<name>MCM7_ORYSI</name>
<reference key="1">
    <citation type="journal article" date="2005" name="PLoS Biol.">
        <title>The genomes of Oryza sativa: a history of duplications.</title>
        <authorList>
            <person name="Yu J."/>
            <person name="Wang J."/>
            <person name="Lin W."/>
            <person name="Li S."/>
            <person name="Li H."/>
            <person name="Zhou J."/>
            <person name="Ni P."/>
            <person name="Dong W."/>
            <person name="Hu S."/>
            <person name="Zeng C."/>
            <person name="Zhang J."/>
            <person name="Zhang Y."/>
            <person name="Li R."/>
            <person name="Xu Z."/>
            <person name="Li S."/>
            <person name="Li X."/>
            <person name="Zheng H."/>
            <person name="Cong L."/>
            <person name="Lin L."/>
            <person name="Yin J."/>
            <person name="Geng J."/>
            <person name="Li G."/>
            <person name="Shi J."/>
            <person name="Liu J."/>
            <person name="Lv H."/>
            <person name="Li J."/>
            <person name="Wang J."/>
            <person name="Deng Y."/>
            <person name="Ran L."/>
            <person name="Shi X."/>
            <person name="Wang X."/>
            <person name="Wu Q."/>
            <person name="Li C."/>
            <person name="Ren X."/>
            <person name="Wang J."/>
            <person name="Wang X."/>
            <person name="Li D."/>
            <person name="Liu D."/>
            <person name="Zhang X."/>
            <person name="Ji Z."/>
            <person name="Zhao W."/>
            <person name="Sun Y."/>
            <person name="Zhang Z."/>
            <person name="Bao J."/>
            <person name="Han Y."/>
            <person name="Dong L."/>
            <person name="Ji J."/>
            <person name="Chen P."/>
            <person name="Wu S."/>
            <person name="Liu J."/>
            <person name="Xiao Y."/>
            <person name="Bu D."/>
            <person name="Tan J."/>
            <person name="Yang L."/>
            <person name="Ye C."/>
            <person name="Zhang J."/>
            <person name="Xu J."/>
            <person name="Zhou Y."/>
            <person name="Yu Y."/>
            <person name="Zhang B."/>
            <person name="Zhuang S."/>
            <person name="Wei H."/>
            <person name="Liu B."/>
            <person name="Lei M."/>
            <person name="Yu H."/>
            <person name="Li Y."/>
            <person name="Xu H."/>
            <person name="Wei S."/>
            <person name="He X."/>
            <person name="Fang L."/>
            <person name="Zhang Z."/>
            <person name="Zhang Y."/>
            <person name="Huang X."/>
            <person name="Su Z."/>
            <person name="Tong W."/>
            <person name="Li J."/>
            <person name="Tong Z."/>
            <person name="Li S."/>
            <person name="Ye J."/>
            <person name="Wang L."/>
            <person name="Fang L."/>
            <person name="Lei T."/>
            <person name="Chen C.-S."/>
            <person name="Chen H.-C."/>
            <person name="Xu Z."/>
            <person name="Li H."/>
            <person name="Huang H."/>
            <person name="Zhang F."/>
            <person name="Xu H."/>
            <person name="Li N."/>
            <person name="Zhao C."/>
            <person name="Li S."/>
            <person name="Dong L."/>
            <person name="Huang Y."/>
            <person name="Li L."/>
            <person name="Xi Y."/>
            <person name="Qi Q."/>
            <person name="Li W."/>
            <person name="Zhang B."/>
            <person name="Hu W."/>
            <person name="Zhang Y."/>
            <person name="Tian X."/>
            <person name="Jiao Y."/>
            <person name="Liang X."/>
            <person name="Jin J."/>
            <person name="Gao L."/>
            <person name="Zheng W."/>
            <person name="Hao B."/>
            <person name="Liu S.-M."/>
            <person name="Wang W."/>
            <person name="Yuan L."/>
            <person name="Cao M."/>
            <person name="McDermott J."/>
            <person name="Samudrala R."/>
            <person name="Wang J."/>
            <person name="Wong G.K.-S."/>
            <person name="Yang H."/>
        </authorList>
    </citation>
    <scope>NUCLEOTIDE SEQUENCE [LARGE SCALE GENOMIC DNA]</scope>
    <source>
        <strain>cv. 93-11</strain>
    </source>
</reference>
<comment type="function">
    <text evidence="1">Probable component of the MCM2-7 complex (MCM complex) that may function as a DNA helicase and which is essential to undergo a single round of replication initiation and elongation per cell cycle in eukaryotic cells.</text>
</comment>
<comment type="catalytic activity">
    <reaction>
        <text>ATP + H2O = ADP + phosphate + H(+)</text>
        <dbReference type="Rhea" id="RHEA:13065"/>
        <dbReference type="ChEBI" id="CHEBI:15377"/>
        <dbReference type="ChEBI" id="CHEBI:15378"/>
        <dbReference type="ChEBI" id="CHEBI:30616"/>
        <dbReference type="ChEBI" id="CHEBI:43474"/>
        <dbReference type="ChEBI" id="CHEBI:456216"/>
        <dbReference type="EC" id="3.6.4.12"/>
    </reaction>
</comment>
<comment type="subunit">
    <text evidence="1">Component of the minichromosome maintenance (MCM) complex, a heterotetramer composed of MCM2, MCM3, MCM4, MCM5, MCM6 and MCM7.</text>
</comment>
<comment type="subcellular location">
    <subcellularLocation>
        <location evidence="2">Nucleus</location>
    </subcellularLocation>
</comment>
<comment type="similarity">
    <text evidence="2">Belongs to the MCM family.</text>
</comment>
<gene>
    <name type="primary">MCM7</name>
    <name type="ORF">OsI_38725</name>
</gene>
<evidence type="ECO:0000250" key="1"/>
<evidence type="ECO:0000305" key="2"/>
<protein>
    <recommendedName>
        <fullName>DNA replication licensing factor MCM7</fullName>
        <ecNumber>3.6.4.12</ecNumber>
    </recommendedName>
    <alternativeName>
        <fullName>Minichromosome maintenance protein 7</fullName>
    </alternativeName>
</protein>
<accession>B8BMI1</accession>
<sequence length="725" mass="81319">MAATATKTIDFAAERALAKDFLANFAGPRGEPKYLNILQDVANRKIRAVQIELDDLFHYKDADDEFLQRVTENTKRYIGIFADAIDELMPESTEAYAVDEDRDILMTQRVDEGADGGADGTDPLQRMPPEIRRFFEVYIKAFSKVTPLTIRQVKASNIGQLVKISGIVTRCSDVKPLMQVAVYTCEECGFEIYQEVTARVFMPLFECPSQRCKLNKAKGNLILQLRASKFLKFQEVKLQELAEHVPKGHIPRSLTVHLRGELTRKVAPGDVVEMSGIFLPMPYYGFRAMRAGLVADTYLESMSITHFKKKYEEYELKGDEQEQIDRLAEDGDIYNKLARSLAPEIFGHEDVKKALLLLLVGAPHRKLTDGMKIRGDLHICLMGDPGVAKSQLLKHIINVAPRGVYTTGRGSSGVGLTAAVQKDPVTNEFVLEGGALVLADMGICAIDEFDKMEESDRTAIHEVMEQQTVSIAKAGITTSLNARTAVLAAANPAWGRYDMRRTPAENINLPPALLSRFDLLWLILDRADMETDLEMARHVVHVHQNLESPALGFTPLEPPVLRAYISAARRVVPSVPRELEEYIATAYSSIRQEEAKSNAPHSYTTIRTLLSILRISIALARLRFSETVAQSDVDEALRLMQMSKYSLYSDDRQRSGLDAISDIYSILRDEAARTNSMDVRYAHALNLISRKGYSEAQLKECLEEYASLNVWQIHPNTFDIHFIDA</sequence>
<proteinExistence type="inferred from homology"/>
<feature type="chain" id="PRO_0000426000" description="DNA replication licensing factor MCM7">
    <location>
        <begin position="1"/>
        <end position="725"/>
    </location>
</feature>
<feature type="domain" description="MCM">
    <location>
        <begin position="333"/>
        <end position="538"/>
    </location>
</feature>
<feature type="short sequence motif" description="Arginine finger">
    <location>
        <begin position="515"/>
        <end position="518"/>
    </location>
</feature>
<feature type="binding site" evidence="1">
    <location>
        <begin position="383"/>
        <end position="390"/>
    </location>
    <ligand>
        <name>ATP</name>
        <dbReference type="ChEBI" id="CHEBI:30616"/>
    </ligand>
</feature>
<organism>
    <name type="scientific">Oryza sativa subsp. indica</name>
    <name type="common">Rice</name>
    <dbReference type="NCBI Taxonomy" id="39946"/>
    <lineage>
        <taxon>Eukaryota</taxon>
        <taxon>Viridiplantae</taxon>
        <taxon>Streptophyta</taxon>
        <taxon>Embryophyta</taxon>
        <taxon>Tracheophyta</taxon>
        <taxon>Spermatophyta</taxon>
        <taxon>Magnoliopsida</taxon>
        <taxon>Liliopsida</taxon>
        <taxon>Poales</taxon>
        <taxon>Poaceae</taxon>
        <taxon>BOP clade</taxon>
        <taxon>Oryzoideae</taxon>
        <taxon>Oryzeae</taxon>
        <taxon>Oryzinae</taxon>
        <taxon>Oryza</taxon>
        <taxon>Oryza sativa</taxon>
    </lineage>
</organism>
<dbReference type="EC" id="3.6.4.12"/>
<dbReference type="EMBL" id="CM000137">
    <property type="protein sequence ID" value="EEC69501.1"/>
    <property type="molecule type" value="Genomic_DNA"/>
</dbReference>
<dbReference type="SMR" id="B8BMI1"/>
<dbReference type="STRING" id="39946.B8BMI1"/>
<dbReference type="EnsemblPlants" id="BGIOSGA036008-TA">
    <property type="protein sequence ID" value="BGIOSGA036008-PA"/>
    <property type="gene ID" value="BGIOSGA036008"/>
</dbReference>
<dbReference type="Gramene" id="BGIOSGA036008-TA">
    <property type="protein sequence ID" value="BGIOSGA036008-PA"/>
    <property type="gene ID" value="BGIOSGA036008"/>
</dbReference>
<dbReference type="HOGENOM" id="CLU_000995_7_2_1"/>
<dbReference type="OMA" id="AQHVTYV"/>
<dbReference type="OrthoDB" id="3207464at2759"/>
<dbReference type="Proteomes" id="UP000007015">
    <property type="component" value="Chromosome 12"/>
</dbReference>
<dbReference type="GO" id="GO:0000785">
    <property type="term" value="C:chromatin"/>
    <property type="evidence" value="ECO:0007669"/>
    <property type="project" value="EnsemblPlants"/>
</dbReference>
<dbReference type="GO" id="GO:0005737">
    <property type="term" value="C:cytoplasm"/>
    <property type="evidence" value="ECO:0007669"/>
    <property type="project" value="EnsemblPlants"/>
</dbReference>
<dbReference type="GO" id="GO:0042555">
    <property type="term" value="C:MCM complex"/>
    <property type="evidence" value="ECO:0007669"/>
    <property type="project" value="InterPro"/>
</dbReference>
<dbReference type="GO" id="GO:0000347">
    <property type="term" value="C:THO complex"/>
    <property type="evidence" value="ECO:0007669"/>
    <property type="project" value="EnsemblPlants"/>
</dbReference>
<dbReference type="GO" id="GO:0005524">
    <property type="term" value="F:ATP binding"/>
    <property type="evidence" value="ECO:0007669"/>
    <property type="project" value="UniProtKB-KW"/>
</dbReference>
<dbReference type="GO" id="GO:0016887">
    <property type="term" value="F:ATP hydrolysis activity"/>
    <property type="evidence" value="ECO:0007669"/>
    <property type="project" value="RHEA"/>
</dbReference>
<dbReference type="GO" id="GO:0003697">
    <property type="term" value="F:single-stranded DNA binding"/>
    <property type="evidence" value="ECO:0007669"/>
    <property type="project" value="TreeGrafter"/>
</dbReference>
<dbReference type="GO" id="GO:0017116">
    <property type="term" value="F:single-stranded DNA helicase activity"/>
    <property type="evidence" value="ECO:0007669"/>
    <property type="project" value="TreeGrafter"/>
</dbReference>
<dbReference type="GO" id="GO:0006270">
    <property type="term" value="P:DNA replication initiation"/>
    <property type="evidence" value="ECO:0007669"/>
    <property type="project" value="InterPro"/>
</dbReference>
<dbReference type="GO" id="GO:0006271">
    <property type="term" value="P:DNA strand elongation involved in DNA replication"/>
    <property type="evidence" value="ECO:0007669"/>
    <property type="project" value="TreeGrafter"/>
</dbReference>
<dbReference type="GO" id="GO:0000727">
    <property type="term" value="P:double-strand break repair via break-induced replication"/>
    <property type="evidence" value="ECO:0007669"/>
    <property type="project" value="TreeGrafter"/>
</dbReference>
<dbReference type="GO" id="GO:0009555">
    <property type="term" value="P:pollen development"/>
    <property type="evidence" value="ECO:0007669"/>
    <property type="project" value="EnsemblPlants"/>
</dbReference>
<dbReference type="GO" id="GO:0090329">
    <property type="term" value="P:regulation of DNA-templated DNA replication"/>
    <property type="evidence" value="ECO:0007669"/>
    <property type="project" value="EnsemblPlants"/>
</dbReference>
<dbReference type="CDD" id="cd17758">
    <property type="entry name" value="MCM7"/>
    <property type="match status" value="1"/>
</dbReference>
<dbReference type="FunFam" id="2.20.28.10:FF:000004">
    <property type="entry name" value="DNA replication licensing factor MCM7"/>
    <property type="match status" value="1"/>
</dbReference>
<dbReference type="FunFam" id="3.30.1640.10:FF:000013">
    <property type="entry name" value="DNA replication licensing factor MCM7"/>
    <property type="match status" value="1"/>
</dbReference>
<dbReference type="FunFam" id="3.40.50.300:FF:000835">
    <property type="entry name" value="DNA replication licensing factor MCM7"/>
    <property type="match status" value="1"/>
</dbReference>
<dbReference type="Gene3D" id="2.20.28.10">
    <property type="match status" value="1"/>
</dbReference>
<dbReference type="Gene3D" id="3.30.1640.10">
    <property type="entry name" value="mini-chromosome maintenance (MCM) complex, chain A, domain 1"/>
    <property type="match status" value="1"/>
</dbReference>
<dbReference type="Gene3D" id="2.40.50.140">
    <property type="entry name" value="Nucleic acid-binding proteins"/>
    <property type="match status" value="1"/>
</dbReference>
<dbReference type="Gene3D" id="3.40.50.300">
    <property type="entry name" value="P-loop containing nucleotide triphosphate hydrolases"/>
    <property type="match status" value="1"/>
</dbReference>
<dbReference type="InterPro" id="IPR031327">
    <property type="entry name" value="MCM"/>
</dbReference>
<dbReference type="InterPro" id="IPR008050">
    <property type="entry name" value="MCM7"/>
</dbReference>
<dbReference type="InterPro" id="IPR018525">
    <property type="entry name" value="MCM_CS"/>
</dbReference>
<dbReference type="InterPro" id="IPR001208">
    <property type="entry name" value="MCM_dom"/>
</dbReference>
<dbReference type="InterPro" id="IPR041562">
    <property type="entry name" value="MCM_lid"/>
</dbReference>
<dbReference type="InterPro" id="IPR027925">
    <property type="entry name" value="MCM_N"/>
</dbReference>
<dbReference type="InterPro" id="IPR033762">
    <property type="entry name" value="MCM_OB"/>
</dbReference>
<dbReference type="InterPro" id="IPR012340">
    <property type="entry name" value="NA-bd_OB-fold"/>
</dbReference>
<dbReference type="InterPro" id="IPR027417">
    <property type="entry name" value="P-loop_NTPase"/>
</dbReference>
<dbReference type="PANTHER" id="PTHR11630">
    <property type="entry name" value="DNA REPLICATION LICENSING FACTOR MCM FAMILY MEMBER"/>
    <property type="match status" value="1"/>
</dbReference>
<dbReference type="PANTHER" id="PTHR11630:SF26">
    <property type="entry name" value="DNA REPLICATION LICENSING FACTOR MCM7"/>
    <property type="match status" value="1"/>
</dbReference>
<dbReference type="Pfam" id="PF24901">
    <property type="entry name" value="HTH_MCM7"/>
    <property type="match status" value="1"/>
</dbReference>
<dbReference type="Pfam" id="PF00493">
    <property type="entry name" value="MCM"/>
    <property type="match status" value="1"/>
</dbReference>
<dbReference type="Pfam" id="PF17855">
    <property type="entry name" value="MCM_lid"/>
    <property type="match status" value="1"/>
</dbReference>
<dbReference type="Pfam" id="PF14551">
    <property type="entry name" value="MCM_N"/>
    <property type="match status" value="1"/>
</dbReference>
<dbReference type="Pfam" id="PF17207">
    <property type="entry name" value="MCM_OB"/>
    <property type="match status" value="1"/>
</dbReference>
<dbReference type="PRINTS" id="PR01657">
    <property type="entry name" value="MCMFAMILY"/>
</dbReference>
<dbReference type="PRINTS" id="PR01663">
    <property type="entry name" value="MCMPROTEIN7"/>
</dbReference>
<dbReference type="SMART" id="SM00350">
    <property type="entry name" value="MCM"/>
    <property type="match status" value="1"/>
</dbReference>
<dbReference type="SUPFAM" id="SSF50249">
    <property type="entry name" value="Nucleic acid-binding proteins"/>
    <property type="match status" value="1"/>
</dbReference>
<dbReference type="SUPFAM" id="SSF52540">
    <property type="entry name" value="P-loop containing nucleoside triphosphate hydrolases"/>
    <property type="match status" value="1"/>
</dbReference>
<dbReference type="PROSITE" id="PS00847">
    <property type="entry name" value="MCM_1"/>
    <property type="match status" value="1"/>
</dbReference>
<dbReference type="PROSITE" id="PS50051">
    <property type="entry name" value="MCM_2"/>
    <property type="match status" value="1"/>
</dbReference>
<keyword id="KW-0067">ATP-binding</keyword>
<keyword id="KW-0131">Cell cycle</keyword>
<keyword id="KW-0235">DNA replication</keyword>
<keyword id="KW-0238">DNA-binding</keyword>
<keyword id="KW-0347">Helicase</keyword>
<keyword id="KW-0378">Hydrolase</keyword>
<keyword id="KW-0547">Nucleotide-binding</keyword>
<keyword id="KW-0539">Nucleus</keyword>
<keyword id="KW-1185">Reference proteome</keyword>